<feature type="signal peptide" evidence="4">
    <location>
        <begin position="1"/>
        <end position="24"/>
    </location>
</feature>
<feature type="chain" id="PRO_0000396804" description="Listeriolysin O">
    <location>
        <begin position="25"/>
        <end position="529"/>
    </location>
</feature>
<feature type="transmembrane region" description="Beta stranded" evidence="3">
    <location>
        <begin position="214"/>
        <end position="227"/>
    </location>
</feature>
<feature type="transmembrane region" description="Beta stranded" evidence="3">
    <location>
        <begin position="234"/>
        <end position="243"/>
    </location>
</feature>
<feature type="transmembrane region" description="Beta stranded" evidence="3">
    <location>
        <begin position="312"/>
        <end position="321"/>
    </location>
</feature>
<feature type="transmembrane region" description="Beta stranded" evidence="3">
    <location>
        <begin position="329"/>
        <end position="341"/>
    </location>
</feature>
<feature type="region of interest" description="Disordered" evidence="5">
    <location>
        <begin position="35"/>
        <end position="54"/>
    </location>
</feature>
<feature type="short sequence motif" description="Conserved undecapeptide" evidence="6">
    <location>
        <begin position="483"/>
        <end position="493"/>
    </location>
</feature>
<feature type="short sequence motif" description="Cholesterol binding" evidence="1">
    <location>
        <begin position="515"/>
        <end position="516"/>
    </location>
</feature>
<protein>
    <recommendedName>
        <fullName>Listeriolysin O</fullName>
    </recommendedName>
    <alternativeName>
        <fullName>LLO</fullName>
    </alternativeName>
    <alternativeName>
        <fullName>Thiol-activated cytolysin</fullName>
    </alternativeName>
</protein>
<sequence>MKKIMLVFITLILVSLPIAQQTEAKDASAFNKENSISSMAPPASPPASPKTPIEKKHADEIDKYIQGLDYNKNNVLVYHGDAVTNVPPRKGYKDGNEYIVVEKKKKSINQNNADIQVVNAISSLTYPGALVKANSELVENQPDVLPVKRDSLTLSIDLPGMTNQDNKIVVKNATKSNVNNAVNTLVERWNEKYAQAYPNVSAKIDYDDEMAYSESQLIAKFGTAFKAVNNSLNVNFGAISEGKMQEEVISFKQIYYNVNVNEPTRPSRFFGKAVTKEQLQALGVNAENPPAYISSVAYGRQVYLKLSTNSHSTKVKAAFDAAVSGKSVSGDVELTNIIKNSSFKAVIYGGSAKDEVQIIDGNLGDLRDILKKGATFNRETPGVPIAYTTNFLKDNELAVIKNNSEYIETTSKAYTDGKINIDHSGGYVAQFNISWDEVNYDPEGNEIVQHKNWSENNKSKLAHFTSSIYLPGNARNINVYAKECTGLAWEWWRTVIDDRNLPLVKNRNISIWGTTLYPKYSNKVDNPIE</sequence>
<dbReference type="EMBL" id="CP001602">
    <property type="protein sequence ID" value="ADB69562.1"/>
    <property type="molecule type" value="Genomic_DNA"/>
</dbReference>
<dbReference type="RefSeq" id="WP_003722731.1">
    <property type="nucleotide sequence ID" value="NC_013766.2"/>
</dbReference>
<dbReference type="SMR" id="D2NZ73"/>
<dbReference type="KEGG" id="lmn:LM5578_2816"/>
<dbReference type="HOGENOM" id="CLU_026912_0_0_9"/>
<dbReference type="GO" id="GO:0005576">
    <property type="term" value="C:extracellular region"/>
    <property type="evidence" value="ECO:0007669"/>
    <property type="project" value="UniProtKB-SubCell"/>
</dbReference>
<dbReference type="GO" id="GO:0020002">
    <property type="term" value="C:host cell plasma membrane"/>
    <property type="evidence" value="ECO:0007669"/>
    <property type="project" value="UniProtKB-SubCell"/>
</dbReference>
<dbReference type="GO" id="GO:0016020">
    <property type="term" value="C:membrane"/>
    <property type="evidence" value="ECO:0007669"/>
    <property type="project" value="UniProtKB-KW"/>
</dbReference>
<dbReference type="GO" id="GO:0015485">
    <property type="term" value="F:cholesterol binding"/>
    <property type="evidence" value="ECO:0007669"/>
    <property type="project" value="InterPro"/>
</dbReference>
<dbReference type="GO" id="GO:0090729">
    <property type="term" value="F:toxin activity"/>
    <property type="evidence" value="ECO:0007669"/>
    <property type="project" value="UniProtKB-KW"/>
</dbReference>
<dbReference type="GO" id="GO:0031640">
    <property type="term" value="P:killing of cells of another organism"/>
    <property type="evidence" value="ECO:0007669"/>
    <property type="project" value="UniProtKB-KW"/>
</dbReference>
<dbReference type="FunFam" id="2.60.40.1430:FF:000001">
    <property type="entry name" value="Thiol-activated cytolysin"/>
    <property type="match status" value="1"/>
</dbReference>
<dbReference type="Gene3D" id="3.30.1040.20">
    <property type="match status" value="1"/>
</dbReference>
<dbReference type="Gene3D" id="3.40.30.40">
    <property type="entry name" value="Perfringolysin"/>
    <property type="match status" value="1"/>
</dbReference>
<dbReference type="Gene3D" id="2.60.40.1430">
    <property type="entry name" value="Perfringolysin, domain 4"/>
    <property type="match status" value="1"/>
</dbReference>
<dbReference type="Gene3D" id="3.90.840.10">
    <property type="entry name" value="Thiol-activated cytolysin superfamily/Thiol-activated cytolysin, alpha-beta domain"/>
    <property type="match status" value="1"/>
</dbReference>
<dbReference type="InterPro" id="IPR035390">
    <property type="entry name" value="Thiol_cytolys_C"/>
</dbReference>
<dbReference type="InterPro" id="IPR038700">
    <property type="entry name" value="Thiol_cytolys_C_sf"/>
</dbReference>
<dbReference type="InterPro" id="IPR001869">
    <property type="entry name" value="Thiol_cytolysin"/>
</dbReference>
<dbReference type="InterPro" id="IPR036363">
    <property type="entry name" value="Thiol_cytolysin_ab_sf"/>
</dbReference>
<dbReference type="InterPro" id="IPR036359">
    <property type="entry name" value="Thiol_cytolysin_sf"/>
</dbReference>
<dbReference type="Pfam" id="PF17440">
    <property type="entry name" value="Thiol_cytolys_C"/>
    <property type="match status" value="1"/>
</dbReference>
<dbReference type="Pfam" id="PF01289">
    <property type="entry name" value="Thiol_cytolysin"/>
    <property type="match status" value="1"/>
</dbReference>
<dbReference type="PRINTS" id="PR01400">
    <property type="entry name" value="TACYTOLYSIN"/>
</dbReference>
<dbReference type="SUPFAM" id="SSF56978">
    <property type="entry name" value="Perfringolysin"/>
    <property type="match status" value="1"/>
</dbReference>
<dbReference type="PROSITE" id="PS00481">
    <property type="entry name" value="THIOL_CYTOLYSINS"/>
    <property type="match status" value="1"/>
</dbReference>
<accession>D2NZ73</accession>
<name>TACY_LISM1</name>
<comment type="function">
    <text evidence="2">A cholesterol-dependent toxin that causes cytolysis by forming pores in cholesterol containing host membranes. After binding to target membranes, the protein undergoes a major conformation change, leading to its insertion in the host membrane and formation of an oligomeric pore complex. Cholesterol is required for binding to host membranes, membrane insertion and pore formation; cholesterol binding is mediated by a Thr-Leu pair in the C-terminus. Acts as a major virulence factor required for the escape of bacteria from phagosomal vacuoles and entry into the host cytosol. Can be reversibly inactivated by oxidation.</text>
</comment>
<comment type="activity regulation">
    <text evidence="2">Activity of listeriolysin O is regulated on multiple levels. It should be high in the phagosome, thereby allowing escape of the bacteria from the phagosomal compartment. Then, once inside the host cytosol, the activity must be controlled to prevent lysis of the host plasma membrane and loss of the intracellular environment.</text>
</comment>
<comment type="subunit">
    <text evidence="3">Homooligomeric pore complex of 35 to 50 subunits; when inserted in the host membrane.</text>
</comment>
<comment type="subcellular location">
    <subcellularLocation>
        <location evidence="2">Secreted</location>
    </subcellularLocation>
    <subcellularLocation>
        <location evidence="2">Host membrane</location>
        <topology evidence="3">Multi-pass membrane protein</topology>
    </subcellularLocation>
    <subcellularLocation>
        <location evidence="2">Host cell membrane</location>
        <topology evidence="3">Multi-pass membrane protein</topology>
    </subcellularLocation>
    <text evidence="3">Secreted as soluble protein that then inserts into the host membrane and forms pores formed by transmembrane beta-strands.</text>
</comment>
<comment type="similarity">
    <text evidence="6">Belongs to the cholesterol-dependent cytolysin family.</text>
</comment>
<proteinExistence type="inferred from homology"/>
<evidence type="ECO:0000250" key="1">
    <source>
        <dbReference type="UniProtKB" id="P0C2E9"/>
    </source>
</evidence>
<evidence type="ECO:0000250" key="2">
    <source>
        <dbReference type="UniProtKB" id="P13128"/>
    </source>
</evidence>
<evidence type="ECO:0000250" key="3">
    <source>
        <dbReference type="UniProtKB" id="Q04IN8"/>
    </source>
</evidence>
<evidence type="ECO:0000255" key="4"/>
<evidence type="ECO:0000256" key="5">
    <source>
        <dbReference type="SAM" id="MobiDB-lite"/>
    </source>
</evidence>
<evidence type="ECO:0000305" key="6"/>
<organism>
    <name type="scientific">Listeria monocytogenes serotype 1/2a (strain 08-5578)</name>
    <dbReference type="NCBI Taxonomy" id="653938"/>
    <lineage>
        <taxon>Bacteria</taxon>
        <taxon>Bacillati</taxon>
        <taxon>Bacillota</taxon>
        <taxon>Bacilli</taxon>
        <taxon>Bacillales</taxon>
        <taxon>Listeriaceae</taxon>
        <taxon>Listeria</taxon>
    </lineage>
</organism>
<gene>
    <name type="primary">hly</name>
    <name type="ordered locus">LM5578_2816</name>
</gene>
<reference key="1">
    <citation type="journal article" date="2010" name="BMC Genomics">
        <title>High-throughput genome sequencing of two Listeria monocytogenes clinical isolates during a large foodborne outbreak.</title>
        <authorList>
            <person name="Gilmour M.W."/>
            <person name="Graham M."/>
            <person name="Van Domselaar G."/>
            <person name="Tyler S."/>
            <person name="Kent H."/>
            <person name="Trout-Yakel K.M."/>
            <person name="Larios O."/>
            <person name="Allen V."/>
            <person name="Lee B."/>
            <person name="Nadon C."/>
        </authorList>
    </citation>
    <scope>NUCLEOTIDE SEQUENCE [LARGE SCALE GENOMIC DNA]</scope>
    <source>
        <strain>08-5578</strain>
    </source>
</reference>
<keyword id="KW-0204">Cytolysis</keyword>
<keyword id="KW-0354">Hemolysis</keyword>
<keyword id="KW-1032">Host cell membrane</keyword>
<keyword id="KW-1043">Host membrane</keyword>
<keyword id="KW-0446">Lipid-binding</keyword>
<keyword id="KW-0472">Membrane</keyword>
<keyword id="KW-0964">Secreted</keyword>
<keyword id="KW-0732">Signal</keyword>
<keyword id="KW-0800">Toxin</keyword>
<keyword id="KW-0812">Transmembrane</keyword>
<keyword id="KW-1134">Transmembrane beta strand</keyword>
<keyword id="KW-0843">Virulence</keyword>